<evidence type="ECO:0000255" key="1">
    <source>
        <dbReference type="HAMAP-Rule" id="MF_00368"/>
    </source>
</evidence>
<evidence type="ECO:0000305" key="2"/>
<organism>
    <name type="scientific">Streptococcus pneumoniae (strain ATCC 700669 / Spain 23F-1)</name>
    <dbReference type="NCBI Taxonomy" id="561276"/>
    <lineage>
        <taxon>Bacteria</taxon>
        <taxon>Bacillati</taxon>
        <taxon>Bacillota</taxon>
        <taxon>Bacilli</taxon>
        <taxon>Lactobacillales</taxon>
        <taxon>Streptococcaceae</taxon>
        <taxon>Streptococcus</taxon>
    </lineage>
</organism>
<accession>B8ZKK3</accession>
<reference key="1">
    <citation type="journal article" date="2009" name="J. Bacteriol.">
        <title>Role of conjugative elements in the evolution of the multidrug-resistant pandemic clone Streptococcus pneumoniae Spain23F ST81.</title>
        <authorList>
            <person name="Croucher N.J."/>
            <person name="Walker D."/>
            <person name="Romero P."/>
            <person name="Lennard N."/>
            <person name="Paterson G.K."/>
            <person name="Bason N.C."/>
            <person name="Mitchell A.M."/>
            <person name="Quail M.A."/>
            <person name="Andrew P.W."/>
            <person name="Parkhill J."/>
            <person name="Bentley S.D."/>
            <person name="Mitchell T.J."/>
        </authorList>
    </citation>
    <scope>NUCLEOTIDE SEQUENCE [LARGE SCALE GENOMIC DNA]</scope>
    <source>
        <strain>ATCC 700669 / Spain 23F-1</strain>
    </source>
</reference>
<keyword id="KW-0687">Ribonucleoprotein</keyword>
<keyword id="KW-0689">Ribosomal protein</keyword>
<gene>
    <name evidence="1" type="primary">rplL</name>
    <name type="ordered locus">SPN23F13190</name>
</gene>
<feature type="chain" id="PRO_1000133864" description="Large ribosomal subunit protein bL12">
    <location>
        <begin position="1"/>
        <end position="122"/>
    </location>
</feature>
<name>RL7_STRPJ</name>
<protein>
    <recommendedName>
        <fullName evidence="1">Large ribosomal subunit protein bL12</fullName>
    </recommendedName>
    <alternativeName>
        <fullName evidence="2">50S ribosomal protein L7/L12</fullName>
    </alternativeName>
</protein>
<comment type="function">
    <text evidence="1">Forms part of the ribosomal stalk which helps the ribosome interact with GTP-bound translation factors. Is thus essential for accurate translation.</text>
</comment>
<comment type="subunit">
    <text evidence="1">Homodimer. Part of the ribosomal stalk of the 50S ribosomal subunit. Forms a multimeric L10(L12)X complex, where L10 forms an elongated spine to which 2 to 4 L12 dimers bind in a sequential fashion. Binds GTP-bound translation factors.</text>
</comment>
<comment type="similarity">
    <text evidence="1">Belongs to the bacterial ribosomal protein bL12 family.</text>
</comment>
<dbReference type="EMBL" id="FM211187">
    <property type="protein sequence ID" value="CAR69120.1"/>
    <property type="molecule type" value="Genomic_DNA"/>
</dbReference>
<dbReference type="RefSeq" id="WP_001196960.1">
    <property type="nucleotide sequence ID" value="NC_011900.1"/>
</dbReference>
<dbReference type="SMR" id="B8ZKK3"/>
<dbReference type="GeneID" id="45653386"/>
<dbReference type="KEGG" id="sne:SPN23F13190"/>
<dbReference type="HOGENOM" id="CLU_086499_3_2_9"/>
<dbReference type="GO" id="GO:0022625">
    <property type="term" value="C:cytosolic large ribosomal subunit"/>
    <property type="evidence" value="ECO:0007669"/>
    <property type="project" value="TreeGrafter"/>
</dbReference>
<dbReference type="GO" id="GO:0003729">
    <property type="term" value="F:mRNA binding"/>
    <property type="evidence" value="ECO:0007669"/>
    <property type="project" value="TreeGrafter"/>
</dbReference>
<dbReference type="GO" id="GO:0003735">
    <property type="term" value="F:structural constituent of ribosome"/>
    <property type="evidence" value="ECO:0007669"/>
    <property type="project" value="InterPro"/>
</dbReference>
<dbReference type="GO" id="GO:0006412">
    <property type="term" value="P:translation"/>
    <property type="evidence" value="ECO:0007669"/>
    <property type="project" value="UniProtKB-UniRule"/>
</dbReference>
<dbReference type="CDD" id="cd00387">
    <property type="entry name" value="Ribosomal_L7_L12"/>
    <property type="match status" value="1"/>
</dbReference>
<dbReference type="FunFam" id="1.20.5.710:FF:000002">
    <property type="entry name" value="50S ribosomal protein L7/L12"/>
    <property type="match status" value="1"/>
</dbReference>
<dbReference type="FunFam" id="3.30.1390.10:FF:000001">
    <property type="entry name" value="50S ribosomal protein L7/L12"/>
    <property type="match status" value="1"/>
</dbReference>
<dbReference type="Gene3D" id="3.30.1390.10">
    <property type="match status" value="1"/>
</dbReference>
<dbReference type="Gene3D" id="1.20.5.710">
    <property type="entry name" value="Single helix bin"/>
    <property type="match status" value="1"/>
</dbReference>
<dbReference type="HAMAP" id="MF_00368">
    <property type="entry name" value="Ribosomal_bL12"/>
    <property type="match status" value="1"/>
</dbReference>
<dbReference type="InterPro" id="IPR000206">
    <property type="entry name" value="Ribosomal_bL12"/>
</dbReference>
<dbReference type="InterPro" id="IPR013823">
    <property type="entry name" value="Ribosomal_bL12_C"/>
</dbReference>
<dbReference type="InterPro" id="IPR014719">
    <property type="entry name" value="Ribosomal_bL12_C/ClpS-like"/>
</dbReference>
<dbReference type="InterPro" id="IPR008932">
    <property type="entry name" value="Ribosomal_bL12_oligo"/>
</dbReference>
<dbReference type="InterPro" id="IPR036235">
    <property type="entry name" value="Ribosomal_bL12_oligo_N_sf"/>
</dbReference>
<dbReference type="NCBIfam" id="TIGR00855">
    <property type="entry name" value="L12"/>
    <property type="match status" value="1"/>
</dbReference>
<dbReference type="PANTHER" id="PTHR45987">
    <property type="entry name" value="39S RIBOSOMAL PROTEIN L12"/>
    <property type="match status" value="1"/>
</dbReference>
<dbReference type="PANTHER" id="PTHR45987:SF4">
    <property type="entry name" value="LARGE RIBOSOMAL SUBUNIT PROTEIN BL12M"/>
    <property type="match status" value="1"/>
</dbReference>
<dbReference type="Pfam" id="PF00542">
    <property type="entry name" value="Ribosomal_L12"/>
    <property type="match status" value="1"/>
</dbReference>
<dbReference type="Pfam" id="PF16320">
    <property type="entry name" value="Ribosomal_L12_N"/>
    <property type="match status" value="1"/>
</dbReference>
<dbReference type="SUPFAM" id="SSF54736">
    <property type="entry name" value="ClpS-like"/>
    <property type="match status" value="1"/>
</dbReference>
<dbReference type="SUPFAM" id="SSF48300">
    <property type="entry name" value="Ribosomal protein L7/12, oligomerisation (N-terminal) domain"/>
    <property type="match status" value="1"/>
</dbReference>
<proteinExistence type="inferred from homology"/>
<sequence>MALNIENIIAEIKEASILELNDLVKAIEEEFGVTAAAPVAVAAADAADAGAAKDSFDVELTSAGDKKVGVIKVVREITGLGLKEAKELVDGAPALVKEGVATAEAEEIKAKLEEAGASVTLK</sequence>